<accession>Q2SU34</accession>
<proteinExistence type="inferred from homology"/>
<evidence type="ECO:0000255" key="1">
    <source>
        <dbReference type="HAMAP-Rule" id="MF_01342"/>
    </source>
</evidence>
<evidence type="ECO:0000256" key="2">
    <source>
        <dbReference type="SAM" id="MobiDB-lite"/>
    </source>
</evidence>
<evidence type="ECO:0000305" key="3"/>
<gene>
    <name evidence="1" type="primary">rplP</name>
    <name type="ordered locus">BTH_I3061</name>
</gene>
<reference key="1">
    <citation type="journal article" date="2005" name="BMC Genomics">
        <title>Bacterial genome adaptation to niches: divergence of the potential virulence genes in three Burkholderia species of different survival strategies.</title>
        <authorList>
            <person name="Kim H.S."/>
            <person name="Schell M.A."/>
            <person name="Yu Y."/>
            <person name="Ulrich R.L."/>
            <person name="Sarria S.H."/>
            <person name="Nierman W.C."/>
            <person name="DeShazer D."/>
        </authorList>
    </citation>
    <scope>NUCLEOTIDE SEQUENCE [LARGE SCALE GENOMIC DNA]</scope>
    <source>
        <strain>ATCC 700388 / DSM 13276 / CCUG 48851 / CIP 106301 / E264</strain>
    </source>
</reference>
<comment type="function">
    <text evidence="1">Binds 23S rRNA and is also seen to make contacts with the A and possibly P site tRNAs.</text>
</comment>
<comment type="subunit">
    <text evidence="1">Part of the 50S ribosomal subunit.</text>
</comment>
<comment type="similarity">
    <text evidence="1">Belongs to the universal ribosomal protein uL16 family.</text>
</comment>
<sequence>MLQPKRRKYRKEQKGRNTGIATRGNAVSFGEFGLKAVGRGRLTARQIEAARRAMTRHIKRGGRIWIRIFPDKPISQKPAEVRMGNGKGNPEYYVAEIQPGKMLYEMDGVSEELAREAFRLAAAKLPLKTTFIVRQLGA</sequence>
<name>RL16_BURTA</name>
<dbReference type="EMBL" id="CP000086">
    <property type="protein sequence ID" value="ABC39481.1"/>
    <property type="molecule type" value="Genomic_DNA"/>
</dbReference>
<dbReference type="RefSeq" id="WP_004199857.1">
    <property type="nucleotide sequence ID" value="NZ_CP008786.1"/>
</dbReference>
<dbReference type="SMR" id="Q2SU34"/>
<dbReference type="GeneID" id="93061825"/>
<dbReference type="KEGG" id="bte:BTH_I3061"/>
<dbReference type="HOGENOM" id="CLU_078858_2_1_4"/>
<dbReference type="Proteomes" id="UP000001930">
    <property type="component" value="Chromosome I"/>
</dbReference>
<dbReference type="GO" id="GO:0022625">
    <property type="term" value="C:cytosolic large ribosomal subunit"/>
    <property type="evidence" value="ECO:0007669"/>
    <property type="project" value="TreeGrafter"/>
</dbReference>
<dbReference type="GO" id="GO:0019843">
    <property type="term" value="F:rRNA binding"/>
    <property type="evidence" value="ECO:0007669"/>
    <property type="project" value="UniProtKB-UniRule"/>
</dbReference>
<dbReference type="GO" id="GO:0003735">
    <property type="term" value="F:structural constituent of ribosome"/>
    <property type="evidence" value="ECO:0007669"/>
    <property type="project" value="InterPro"/>
</dbReference>
<dbReference type="GO" id="GO:0000049">
    <property type="term" value="F:tRNA binding"/>
    <property type="evidence" value="ECO:0007669"/>
    <property type="project" value="UniProtKB-KW"/>
</dbReference>
<dbReference type="GO" id="GO:0006412">
    <property type="term" value="P:translation"/>
    <property type="evidence" value="ECO:0007669"/>
    <property type="project" value="UniProtKB-UniRule"/>
</dbReference>
<dbReference type="CDD" id="cd01433">
    <property type="entry name" value="Ribosomal_L16_L10e"/>
    <property type="match status" value="1"/>
</dbReference>
<dbReference type="FunFam" id="3.90.1170.10:FF:000001">
    <property type="entry name" value="50S ribosomal protein L16"/>
    <property type="match status" value="1"/>
</dbReference>
<dbReference type="Gene3D" id="3.90.1170.10">
    <property type="entry name" value="Ribosomal protein L10e/L16"/>
    <property type="match status" value="1"/>
</dbReference>
<dbReference type="HAMAP" id="MF_01342">
    <property type="entry name" value="Ribosomal_uL16"/>
    <property type="match status" value="1"/>
</dbReference>
<dbReference type="InterPro" id="IPR047873">
    <property type="entry name" value="Ribosomal_uL16"/>
</dbReference>
<dbReference type="InterPro" id="IPR000114">
    <property type="entry name" value="Ribosomal_uL16_bact-type"/>
</dbReference>
<dbReference type="InterPro" id="IPR020798">
    <property type="entry name" value="Ribosomal_uL16_CS"/>
</dbReference>
<dbReference type="InterPro" id="IPR016180">
    <property type="entry name" value="Ribosomal_uL16_dom"/>
</dbReference>
<dbReference type="InterPro" id="IPR036920">
    <property type="entry name" value="Ribosomal_uL16_sf"/>
</dbReference>
<dbReference type="NCBIfam" id="TIGR01164">
    <property type="entry name" value="rplP_bact"/>
    <property type="match status" value="1"/>
</dbReference>
<dbReference type="PANTHER" id="PTHR12220">
    <property type="entry name" value="50S/60S RIBOSOMAL PROTEIN L16"/>
    <property type="match status" value="1"/>
</dbReference>
<dbReference type="PANTHER" id="PTHR12220:SF13">
    <property type="entry name" value="LARGE RIBOSOMAL SUBUNIT PROTEIN UL16M"/>
    <property type="match status" value="1"/>
</dbReference>
<dbReference type="Pfam" id="PF00252">
    <property type="entry name" value="Ribosomal_L16"/>
    <property type="match status" value="1"/>
</dbReference>
<dbReference type="PRINTS" id="PR00060">
    <property type="entry name" value="RIBOSOMALL16"/>
</dbReference>
<dbReference type="SUPFAM" id="SSF54686">
    <property type="entry name" value="Ribosomal protein L16p/L10e"/>
    <property type="match status" value="1"/>
</dbReference>
<dbReference type="PROSITE" id="PS00586">
    <property type="entry name" value="RIBOSOMAL_L16_1"/>
    <property type="match status" value="1"/>
</dbReference>
<keyword id="KW-0687">Ribonucleoprotein</keyword>
<keyword id="KW-0689">Ribosomal protein</keyword>
<keyword id="KW-0694">RNA-binding</keyword>
<keyword id="KW-0699">rRNA-binding</keyword>
<keyword id="KW-0820">tRNA-binding</keyword>
<feature type="chain" id="PRO_0000251623" description="Large ribosomal subunit protein uL16">
    <location>
        <begin position="1"/>
        <end position="138"/>
    </location>
</feature>
<feature type="region of interest" description="Disordered" evidence="2">
    <location>
        <begin position="1"/>
        <end position="20"/>
    </location>
</feature>
<feature type="compositionally biased region" description="Basic residues" evidence="2">
    <location>
        <begin position="1"/>
        <end position="13"/>
    </location>
</feature>
<protein>
    <recommendedName>
        <fullName evidence="1">Large ribosomal subunit protein uL16</fullName>
    </recommendedName>
    <alternativeName>
        <fullName evidence="3">50S ribosomal protein L16</fullName>
    </alternativeName>
</protein>
<organism>
    <name type="scientific">Burkholderia thailandensis (strain ATCC 700388 / DSM 13276 / CCUG 48851 / CIP 106301 / E264)</name>
    <dbReference type="NCBI Taxonomy" id="271848"/>
    <lineage>
        <taxon>Bacteria</taxon>
        <taxon>Pseudomonadati</taxon>
        <taxon>Pseudomonadota</taxon>
        <taxon>Betaproteobacteria</taxon>
        <taxon>Burkholderiales</taxon>
        <taxon>Burkholderiaceae</taxon>
        <taxon>Burkholderia</taxon>
        <taxon>pseudomallei group</taxon>
    </lineage>
</organism>